<evidence type="ECO:0000250" key="1">
    <source>
        <dbReference type="UniProtKB" id="Q3TJZ6"/>
    </source>
</evidence>
<evidence type="ECO:0000250" key="2">
    <source>
        <dbReference type="UniProtKB" id="Q8NCA5"/>
    </source>
</evidence>
<evidence type="ECO:0000256" key="3">
    <source>
        <dbReference type="SAM" id="MobiDB-lite"/>
    </source>
</evidence>
<evidence type="ECO:0000305" key="4"/>
<evidence type="ECO:0000312" key="5">
    <source>
        <dbReference type="RGD" id="1305486"/>
    </source>
</evidence>
<gene>
    <name evidence="5" type="primary">Fam98a</name>
</gene>
<reference key="1">
    <citation type="journal article" date="2004" name="Genome Res.">
        <title>The status, quality, and expansion of the NIH full-length cDNA project: the Mammalian Gene Collection (MGC).</title>
        <authorList>
            <consortium name="The MGC Project Team"/>
        </authorList>
    </citation>
    <scope>NUCLEOTIDE SEQUENCE [LARGE SCALE MRNA]</scope>
    <source>
        <tissue>Ovary</tissue>
    </source>
</reference>
<comment type="function">
    <text evidence="1 2">Positively stimulates PRMT1-induced protein arginine methylation. Involved in skeletal homeostasis. Positively regulates lysosome peripheral distribution and ruffled border formation in osteoclasts.</text>
</comment>
<comment type="subunit">
    <text evidence="1 2">Interacts (via N- and C-terminus) with DDX1. Interacts (via N- and C-terminus) with C14orf166. Interacts with FAM98B. Interacts with PLEKHM1 (via N- and C-terminus).</text>
</comment>
<comment type="similarity">
    <text evidence="4">Belongs to the FAM98 family.</text>
</comment>
<feature type="chain" id="PRO_0000187187" description="Protein FAM98A">
    <location>
        <begin position="1"/>
        <end position="515"/>
    </location>
</feature>
<feature type="region of interest" description="Disordered" evidence="3">
    <location>
        <begin position="297"/>
        <end position="411"/>
    </location>
</feature>
<feature type="region of interest" description="Disordered" evidence="3">
    <location>
        <begin position="432"/>
        <end position="515"/>
    </location>
</feature>
<feature type="compositionally biased region" description="Basic and acidic residues" evidence="3">
    <location>
        <begin position="302"/>
        <end position="311"/>
    </location>
</feature>
<feature type="compositionally biased region" description="Gly residues" evidence="3">
    <location>
        <begin position="382"/>
        <end position="395"/>
    </location>
</feature>
<feature type="compositionally biased region" description="Basic and acidic residues" evidence="3">
    <location>
        <begin position="444"/>
        <end position="456"/>
    </location>
</feature>
<feature type="compositionally biased region" description="Gly residues" evidence="3">
    <location>
        <begin position="457"/>
        <end position="481"/>
    </location>
</feature>
<feature type="compositionally biased region" description="Low complexity" evidence="3">
    <location>
        <begin position="485"/>
        <end position="501"/>
    </location>
</feature>
<feature type="compositionally biased region" description="Polar residues" evidence="3">
    <location>
        <begin position="502"/>
        <end position="515"/>
    </location>
</feature>
<proteinExistence type="evidence at transcript level"/>
<dbReference type="EMBL" id="BC089217">
    <property type="protein sequence ID" value="AAH89217.1"/>
    <property type="molecule type" value="mRNA"/>
</dbReference>
<dbReference type="RefSeq" id="NP_001014095.1">
    <property type="nucleotide sequence ID" value="NM_001014073.2"/>
</dbReference>
<dbReference type="BioGRID" id="260572">
    <property type="interactions" value="2"/>
</dbReference>
<dbReference type="FunCoup" id="Q5FWT1">
    <property type="interactions" value="2489"/>
</dbReference>
<dbReference type="IntAct" id="Q5FWT1">
    <property type="interactions" value="3"/>
</dbReference>
<dbReference type="MINT" id="Q5FWT1"/>
<dbReference type="STRING" id="10116.ENSRNOP00000042004"/>
<dbReference type="iPTMnet" id="Q5FWT1"/>
<dbReference type="PhosphoSitePlus" id="Q5FWT1"/>
<dbReference type="jPOST" id="Q5FWT1"/>
<dbReference type="PaxDb" id="10116-ENSRNOP00000042004"/>
<dbReference type="GeneID" id="313873"/>
<dbReference type="KEGG" id="rno:313873"/>
<dbReference type="UCSC" id="RGD:1305486">
    <property type="organism name" value="rat"/>
</dbReference>
<dbReference type="AGR" id="RGD:1305486"/>
<dbReference type="CTD" id="25940"/>
<dbReference type="RGD" id="1305486">
    <property type="gene designation" value="Fam98a"/>
</dbReference>
<dbReference type="VEuPathDB" id="HostDB:ENSRNOG00000030328"/>
<dbReference type="eggNOG" id="KOG3973">
    <property type="taxonomic scope" value="Eukaryota"/>
</dbReference>
<dbReference type="HOGENOM" id="CLU_038408_1_2_1"/>
<dbReference type="InParanoid" id="Q5FWT1"/>
<dbReference type="OrthoDB" id="512356at2759"/>
<dbReference type="PhylomeDB" id="Q5FWT1"/>
<dbReference type="PRO" id="PR:Q5FWT1"/>
<dbReference type="Proteomes" id="UP000002494">
    <property type="component" value="Chromosome 6"/>
</dbReference>
<dbReference type="Bgee" id="ENSRNOG00000030328">
    <property type="expression patterns" value="Expressed in testis and 20 other cell types or tissues"/>
</dbReference>
<dbReference type="GO" id="GO:0072669">
    <property type="term" value="C:tRNA-splicing ligase complex"/>
    <property type="evidence" value="ECO:0000318"/>
    <property type="project" value="GO_Central"/>
</dbReference>
<dbReference type="GO" id="GO:0008276">
    <property type="term" value="F:protein methyltransferase activity"/>
    <property type="evidence" value="ECO:0000250"/>
    <property type="project" value="UniProtKB"/>
</dbReference>
<dbReference type="GO" id="GO:0032418">
    <property type="term" value="P:lysosome localization"/>
    <property type="evidence" value="ECO:0000250"/>
    <property type="project" value="UniProtKB"/>
</dbReference>
<dbReference type="GO" id="GO:0008284">
    <property type="term" value="P:positive regulation of cell population proliferation"/>
    <property type="evidence" value="ECO:0000250"/>
    <property type="project" value="UniProtKB"/>
</dbReference>
<dbReference type="GO" id="GO:0010628">
    <property type="term" value="P:positive regulation of gene expression"/>
    <property type="evidence" value="ECO:0000250"/>
    <property type="project" value="UniProtKB"/>
</dbReference>
<dbReference type="GO" id="GO:1900029">
    <property type="term" value="P:positive regulation of ruffle assembly"/>
    <property type="evidence" value="ECO:0000250"/>
    <property type="project" value="UniProtKB"/>
</dbReference>
<dbReference type="GO" id="GO:0006479">
    <property type="term" value="P:protein methylation"/>
    <property type="evidence" value="ECO:0000250"/>
    <property type="project" value="UniProtKB"/>
</dbReference>
<dbReference type="InterPro" id="IPR018797">
    <property type="entry name" value="FAM98"/>
</dbReference>
<dbReference type="PANTHER" id="PTHR31353">
    <property type="entry name" value="FAM98"/>
    <property type="match status" value="1"/>
</dbReference>
<dbReference type="PANTHER" id="PTHR31353:SF9">
    <property type="entry name" value="PROTEIN FAM98A"/>
    <property type="match status" value="1"/>
</dbReference>
<dbReference type="Pfam" id="PF10239">
    <property type="entry name" value="DUF2465"/>
    <property type="match status" value="1"/>
</dbReference>
<accession>Q5FWT1</accession>
<protein>
    <recommendedName>
        <fullName evidence="4">Protein FAM98A</fullName>
    </recommendedName>
</protein>
<sequence length="515" mass="55070">MECDLMETDILESLEDLGYKGPLLDDGALLQAVSAGAASPEFTKLCAWLVSELRVLCKLEENVQATNSPSEAEEFQLEVSGLLGEMNCPYPCLTSGDVTKRLLVQKNCLLLLTYLISELEAARMLCVNAPPKKAQEGGGSEVFQELKGICIALGMSKPPANITMFQFFSGIEKKLKETLAKVPPNHVGKPLLKKSMGPAHWEKIEAINQAIANEYEVRRKLLIKRLDVTVQSFGWSDRAKSQTEKLAKVYQPKRSVLSPKGNISIAHLLAARQDLSKILRTSSGSIREKTACAINKVLMGRVPDRGGRPNEIEPPPPEMPPWQKRQDGPQQQAGGRGGGRGGYEHSSYGGRGGHEQGGRGGRGGYDHGGRGGGRGNKHQGGWTDGGSASGGGYQDGGYRDPGFQPGGYHGGHSSGYQGGGYGGFQTSSYTGSGYQGGGYQQDNRYQDGGHHGERGSGRGGRGGRGGRGGRGSQGGGWGGRGSQTYHQGGQFEQHFQHGGYQYSHSGFGQGRHYTS</sequence>
<keyword id="KW-1185">Reference proteome</keyword>
<organism>
    <name type="scientific">Rattus norvegicus</name>
    <name type="common">Rat</name>
    <dbReference type="NCBI Taxonomy" id="10116"/>
    <lineage>
        <taxon>Eukaryota</taxon>
        <taxon>Metazoa</taxon>
        <taxon>Chordata</taxon>
        <taxon>Craniata</taxon>
        <taxon>Vertebrata</taxon>
        <taxon>Euteleostomi</taxon>
        <taxon>Mammalia</taxon>
        <taxon>Eutheria</taxon>
        <taxon>Euarchontoglires</taxon>
        <taxon>Glires</taxon>
        <taxon>Rodentia</taxon>
        <taxon>Myomorpha</taxon>
        <taxon>Muroidea</taxon>
        <taxon>Muridae</taxon>
        <taxon>Murinae</taxon>
        <taxon>Rattus</taxon>
    </lineage>
</organism>
<name>FA98A_RAT</name>